<protein>
    <recommendedName>
        <fullName evidence="1">Small ribosomal subunit protein uS17</fullName>
    </recommendedName>
    <alternativeName>
        <fullName evidence="2">30S ribosomal protein S17</fullName>
    </alternativeName>
</protein>
<sequence>MALKERIGTVVSDKMDKTVVVAVINRYPHPTYKKIVSRTTRYKAHDPENTCVLGDRVKIRETRPLSAHKRWAIEEILNKTSQAKEVKK</sequence>
<keyword id="KW-1185">Reference proteome</keyword>
<keyword id="KW-0687">Ribonucleoprotein</keyword>
<keyword id="KW-0689">Ribosomal protein</keyword>
<keyword id="KW-0694">RNA-binding</keyword>
<keyword id="KW-0699">rRNA-binding</keyword>
<accession>A3PF38</accession>
<reference key="1">
    <citation type="journal article" date="2007" name="PLoS Genet.">
        <title>Patterns and implications of gene gain and loss in the evolution of Prochlorococcus.</title>
        <authorList>
            <person name="Kettler G.C."/>
            <person name="Martiny A.C."/>
            <person name="Huang K."/>
            <person name="Zucker J."/>
            <person name="Coleman M.L."/>
            <person name="Rodrigue S."/>
            <person name="Chen F."/>
            <person name="Lapidus A."/>
            <person name="Ferriera S."/>
            <person name="Johnson J."/>
            <person name="Steglich C."/>
            <person name="Church G.M."/>
            <person name="Richardson P."/>
            <person name="Chisholm S.W."/>
        </authorList>
    </citation>
    <scope>NUCLEOTIDE SEQUENCE [LARGE SCALE GENOMIC DNA]</scope>
    <source>
        <strain>MIT 9301</strain>
    </source>
</reference>
<dbReference type="EMBL" id="CP000576">
    <property type="protein sequence ID" value="ABO18363.1"/>
    <property type="molecule type" value="Genomic_DNA"/>
</dbReference>
<dbReference type="RefSeq" id="WP_011819162.1">
    <property type="nucleotide sequence ID" value="NC_009091.1"/>
</dbReference>
<dbReference type="SMR" id="A3PF38"/>
<dbReference type="STRING" id="167546.P9301_17401"/>
<dbReference type="KEGG" id="pmg:P9301_17401"/>
<dbReference type="eggNOG" id="COG0186">
    <property type="taxonomic scope" value="Bacteria"/>
</dbReference>
<dbReference type="HOGENOM" id="CLU_073626_1_2_3"/>
<dbReference type="OrthoDB" id="9811714at2"/>
<dbReference type="Proteomes" id="UP000001430">
    <property type="component" value="Chromosome"/>
</dbReference>
<dbReference type="GO" id="GO:0022627">
    <property type="term" value="C:cytosolic small ribosomal subunit"/>
    <property type="evidence" value="ECO:0007669"/>
    <property type="project" value="TreeGrafter"/>
</dbReference>
<dbReference type="GO" id="GO:0019843">
    <property type="term" value="F:rRNA binding"/>
    <property type="evidence" value="ECO:0007669"/>
    <property type="project" value="UniProtKB-UniRule"/>
</dbReference>
<dbReference type="GO" id="GO:0003735">
    <property type="term" value="F:structural constituent of ribosome"/>
    <property type="evidence" value="ECO:0007669"/>
    <property type="project" value="InterPro"/>
</dbReference>
<dbReference type="GO" id="GO:0006412">
    <property type="term" value="P:translation"/>
    <property type="evidence" value="ECO:0007669"/>
    <property type="project" value="UniProtKB-UniRule"/>
</dbReference>
<dbReference type="CDD" id="cd00364">
    <property type="entry name" value="Ribosomal_uS17"/>
    <property type="match status" value="1"/>
</dbReference>
<dbReference type="Gene3D" id="2.40.50.140">
    <property type="entry name" value="Nucleic acid-binding proteins"/>
    <property type="match status" value="1"/>
</dbReference>
<dbReference type="HAMAP" id="MF_01345_B">
    <property type="entry name" value="Ribosomal_uS17_B"/>
    <property type="match status" value="1"/>
</dbReference>
<dbReference type="InterPro" id="IPR012340">
    <property type="entry name" value="NA-bd_OB-fold"/>
</dbReference>
<dbReference type="InterPro" id="IPR000266">
    <property type="entry name" value="Ribosomal_uS17"/>
</dbReference>
<dbReference type="InterPro" id="IPR019984">
    <property type="entry name" value="Ribosomal_uS17_bact/chlr"/>
</dbReference>
<dbReference type="InterPro" id="IPR019979">
    <property type="entry name" value="Ribosomal_uS17_CS"/>
</dbReference>
<dbReference type="NCBIfam" id="NF004123">
    <property type="entry name" value="PRK05610.1"/>
    <property type="match status" value="1"/>
</dbReference>
<dbReference type="NCBIfam" id="TIGR03635">
    <property type="entry name" value="uS17_bact"/>
    <property type="match status" value="1"/>
</dbReference>
<dbReference type="PANTHER" id="PTHR10744">
    <property type="entry name" value="40S RIBOSOMAL PROTEIN S11 FAMILY MEMBER"/>
    <property type="match status" value="1"/>
</dbReference>
<dbReference type="PANTHER" id="PTHR10744:SF1">
    <property type="entry name" value="SMALL RIBOSOMAL SUBUNIT PROTEIN US17M"/>
    <property type="match status" value="1"/>
</dbReference>
<dbReference type="Pfam" id="PF00366">
    <property type="entry name" value="Ribosomal_S17"/>
    <property type="match status" value="1"/>
</dbReference>
<dbReference type="PRINTS" id="PR00973">
    <property type="entry name" value="RIBOSOMALS17"/>
</dbReference>
<dbReference type="SUPFAM" id="SSF50249">
    <property type="entry name" value="Nucleic acid-binding proteins"/>
    <property type="match status" value="1"/>
</dbReference>
<dbReference type="PROSITE" id="PS00056">
    <property type="entry name" value="RIBOSOMAL_S17"/>
    <property type="match status" value="1"/>
</dbReference>
<name>RS17_PROM0</name>
<evidence type="ECO:0000255" key="1">
    <source>
        <dbReference type="HAMAP-Rule" id="MF_01345"/>
    </source>
</evidence>
<evidence type="ECO:0000305" key="2"/>
<comment type="function">
    <text evidence="1">One of the primary rRNA binding proteins, it binds specifically to the 5'-end of 16S ribosomal RNA.</text>
</comment>
<comment type="subunit">
    <text evidence="1">Part of the 30S ribosomal subunit.</text>
</comment>
<comment type="similarity">
    <text evidence="1">Belongs to the universal ribosomal protein uS17 family.</text>
</comment>
<proteinExistence type="inferred from homology"/>
<feature type="chain" id="PRO_1000054992" description="Small ribosomal subunit protein uS17">
    <location>
        <begin position="1"/>
        <end position="88"/>
    </location>
</feature>
<gene>
    <name evidence="1" type="primary">rpsQ</name>
    <name evidence="1" type="synonym">rps17</name>
    <name type="ordered locus">P9301_17401</name>
</gene>
<organism>
    <name type="scientific">Prochlorococcus marinus (strain MIT 9301)</name>
    <dbReference type="NCBI Taxonomy" id="167546"/>
    <lineage>
        <taxon>Bacteria</taxon>
        <taxon>Bacillati</taxon>
        <taxon>Cyanobacteriota</taxon>
        <taxon>Cyanophyceae</taxon>
        <taxon>Synechococcales</taxon>
        <taxon>Prochlorococcaceae</taxon>
        <taxon>Prochlorococcus</taxon>
    </lineage>
</organism>